<feature type="chain" id="PRO_1000024591" description="ATP-dependent Clp protease ATP-binding subunit ClpX">
    <location>
        <begin position="1"/>
        <end position="426"/>
    </location>
</feature>
<feature type="domain" description="ClpX-type ZB" evidence="2">
    <location>
        <begin position="1"/>
        <end position="54"/>
    </location>
</feature>
<feature type="binding site" evidence="2">
    <location>
        <position position="13"/>
    </location>
    <ligand>
        <name>Zn(2+)</name>
        <dbReference type="ChEBI" id="CHEBI:29105"/>
    </ligand>
</feature>
<feature type="binding site" evidence="2">
    <location>
        <position position="16"/>
    </location>
    <ligand>
        <name>Zn(2+)</name>
        <dbReference type="ChEBI" id="CHEBI:29105"/>
    </ligand>
</feature>
<feature type="binding site" evidence="2">
    <location>
        <position position="35"/>
    </location>
    <ligand>
        <name>Zn(2+)</name>
        <dbReference type="ChEBI" id="CHEBI:29105"/>
    </ligand>
</feature>
<feature type="binding site" evidence="2">
    <location>
        <position position="38"/>
    </location>
    <ligand>
        <name>Zn(2+)</name>
        <dbReference type="ChEBI" id="CHEBI:29105"/>
    </ligand>
</feature>
<feature type="binding site" evidence="1">
    <location>
        <begin position="122"/>
        <end position="129"/>
    </location>
    <ligand>
        <name>ATP</name>
        <dbReference type="ChEBI" id="CHEBI:30616"/>
    </ligand>
</feature>
<accession>Q1B601</accession>
<reference key="1">
    <citation type="submission" date="2006-06" db="EMBL/GenBank/DDBJ databases">
        <title>Complete sequence of chromosome of Mycobacterium sp. MCS.</title>
        <authorList>
            <consortium name="US DOE Joint Genome Institute"/>
            <person name="Copeland A."/>
            <person name="Lucas S."/>
            <person name="Lapidus A."/>
            <person name="Barry K."/>
            <person name="Detter J.C."/>
            <person name="Glavina del Rio T."/>
            <person name="Hammon N."/>
            <person name="Israni S."/>
            <person name="Dalin E."/>
            <person name="Tice H."/>
            <person name="Pitluck S."/>
            <person name="Martinez M."/>
            <person name="Schmutz J."/>
            <person name="Larimer F."/>
            <person name="Land M."/>
            <person name="Hauser L."/>
            <person name="Kyrpides N."/>
            <person name="Kim E."/>
            <person name="Miller C.D."/>
            <person name="Hughes J.E."/>
            <person name="Anderson A.J."/>
            <person name="Sims R.C."/>
            <person name="Richardson P."/>
        </authorList>
    </citation>
    <scope>NUCLEOTIDE SEQUENCE [LARGE SCALE GENOMIC DNA]</scope>
    <source>
        <strain>MCS</strain>
    </source>
</reference>
<gene>
    <name evidence="1" type="primary">clpX</name>
    <name type="ordered locus">Mmcs_3576</name>
</gene>
<organism>
    <name type="scientific">Mycobacterium sp. (strain MCS)</name>
    <dbReference type="NCBI Taxonomy" id="164756"/>
    <lineage>
        <taxon>Bacteria</taxon>
        <taxon>Bacillati</taxon>
        <taxon>Actinomycetota</taxon>
        <taxon>Actinomycetes</taxon>
        <taxon>Mycobacteriales</taxon>
        <taxon>Mycobacteriaceae</taxon>
        <taxon>Mycobacterium</taxon>
    </lineage>
</organism>
<sequence>MARIGDGGDLLKCSFCGKSQKQVKKLIAGPGVYICDECIDLCNEIIEEELADADEVKLDELPKPAEIREFLENYVIGQDTAKRTLAVAVYNHYKRIQAGEKSRDSRTEPVELTKSNILMLGPTGCGKTYLAQTLAKMLNVPFAIADATALTEAGYVGEDVENILLKLIQAADYDVKRAETGIIYIDEVDKIARKSENPSITRDVSGEGVQQALLKILEGTQASVPPQGGRKHPHQEFIQIDTTNVLFIVAGAFAGLEKIVSDRVGKRGLGFGAEVRSKAEIDTQDHFAEVMPEDLIKFGLIPEFIGRLPVVASVTNLDKESLVKILSEPKNALVKQYTRLFEMDGVELEFTGDALDAIADQAIHRGTGARGLRAIMEEVLLPVMYDIPSRDDVAKVVVTKETVQDNVLPTIVPRKPSRPERRDKSA</sequence>
<keyword id="KW-0067">ATP-binding</keyword>
<keyword id="KW-0143">Chaperone</keyword>
<keyword id="KW-0479">Metal-binding</keyword>
<keyword id="KW-0547">Nucleotide-binding</keyword>
<keyword id="KW-0862">Zinc</keyword>
<comment type="function">
    <text evidence="1">ATP-dependent specificity component of the Clp protease. It directs the protease to specific substrates. Can perform chaperone functions in the absence of ClpP.</text>
</comment>
<comment type="subunit">
    <text evidence="1">Component of the ClpX-ClpP complex. Forms a hexameric ring that, in the presence of ATP, binds to fourteen ClpP subunits assembled into a disk-like structure with a central cavity, resembling the structure of eukaryotic proteasomes.</text>
</comment>
<comment type="similarity">
    <text evidence="1">Belongs to the ClpX chaperone family.</text>
</comment>
<name>CLPX_MYCSS</name>
<dbReference type="EMBL" id="CP000384">
    <property type="protein sequence ID" value="ABG09683.1"/>
    <property type="molecule type" value="Genomic_DNA"/>
</dbReference>
<dbReference type="SMR" id="Q1B601"/>
<dbReference type="KEGG" id="mmc:Mmcs_3576"/>
<dbReference type="HOGENOM" id="CLU_014218_8_2_11"/>
<dbReference type="BioCyc" id="MSP164756:G1G6O-3647-MONOMER"/>
<dbReference type="GO" id="GO:0009376">
    <property type="term" value="C:HslUV protease complex"/>
    <property type="evidence" value="ECO:0007669"/>
    <property type="project" value="TreeGrafter"/>
</dbReference>
<dbReference type="GO" id="GO:0005524">
    <property type="term" value="F:ATP binding"/>
    <property type="evidence" value="ECO:0007669"/>
    <property type="project" value="UniProtKB-UniRule"/>
</dbReference>
<dbReference type="GO" id="GO:0016887">
    <property type="term" value="F:ATP hydrolysis activity"/>
    <property type="evidence" value="ECO:0007669"/>
    <property type="project" value="InterPro"/>
</dbReference>
<dbReference type="GO" id="GO:0140662">
    <property type="term" value="F:ATP-dependent protein folding chaperone"/>
    <property type="evidence" value="ECO:0007669"/>
    <property type="project" value="InterPro"/>
</dbReference>
<dbReference type="GO" id="GO:0046983">
    <property type="term" value="F:protein dimerization activity"/>
    <property type="evidence" value="ECO:0007669"/>
    <property type="project" value="InterPro"/>
</dbReference>
<dbReference type="GO" id="GO:0051082">
    <property type="term" value="F:unfolded protein binding"/>
    <property type="evidence" value="ECO:0007669"/>
    <property type="project" value="UniProtKB-UniRule"/>
</dbReference>
<dbReference type="GO" id="GO:0008270">
    <property type="term" value="F:zinc ion binding"/>
    <property type="evidence" value="ECO:0007669"/>
    <property type="project" value="InterPro"/>
</dbReference>
<dbReference type="GO" id="GO:0051301">
    <property type="term" value="P:cell division"/>
    <property type="evidence" value="ECO:0007669"/>
    <property type="project" value="TreeGrafter"/>
</dbReference>
<dbReference type="GO" id="GO:0051603">
    <property type="term" value="P:proteolysis involved in protein catabolic process"/>
    <property type="evidence" value="ECO:0007669"/>
    <property type="project" value="TreeGrafter"/>
</dbReference>
<dbReference type="CDD" id="cd19497">
    <property type="entry name" value="RecA-like_ClpX"/>
    <property type="match status" value="1"/>
</dbReference>
<dbReference type="FunFam" id="1.10.8.60:FF:000002">
    <property type="entry name" value="ATP-dependent Clp protease ATP-binding subunit ClpX"/>
    <property type="match status" value="1"/>
</dbReference>
<dbReference type="FunFam" id="3.40.50.300:FF:000005">
    <property type="entry name" value="ATP-dependent Clp protease ATP-binding subunit ClpX"/>
    <property type="match status" value="1"/>
</dbReference>
<dbReference type="Gene3D" id="1.10.8.60">
    <property type="match status" value="1"/>
</dbReference>
<dbReference type="Gene3D" id="6.20.220.10">
    <property type="entry name" value="ClpX chaperone, C4-type zinc finger domain"/>
    <property type="match status" value="1"/>
</dbReference>
<dbReference type="Gene3D" id="3.40.50.300">
    <property type="entry name" value="P-loop containing nucleotide triphosphate hydrolases"/>
    <property type="match status" value="1"/>
</dbReference>
<dbReference type="HAMAP" id="MF_00175">
    <property type="entry name" value="ClpX"/>
    <property type="match status" value="1"/>
</dbReference>
<dbReference type="InterPro" id="IPR003593">
    <property type="entry name" value="AAA+_ATPase"/>
</dbReference>
<dbReference type="InterPro" id="IPR050052">
    <property type="entry name" value="ATP-dep_Clp_protease_ClpX"/>
</dbReference>
<dbReference type="InterPro" id="IPR003959">
    <property type="entry name" value="ATPase_AAA_core"/>
</dbReference>
<dbReference type="InterPro" id="IPR019489">
    <property type="entry name" value="Clp_ATPase_C"/>
</dbReference>
<dbReference type="InterPro" id="IPR004487">
    <property type="entry name" value="Clp_protease_ATP-bd_su_ClpX"/>
</dbReference>
<dbReference type="InterPro" id="IPR046425">
    <property type="entry name" value="ClpX_bact"/>
</dbReference>
<dbReference type="InterPro" id="IPR027417">
    <property type="entry name" value="P-loop_NTPase"/>
</dbReference>
<dbReference type="InterPro" id="IPR010603">
    <property type="entry name" value="Znf_CppX_C4"/>
</dbReference>
<dbReference type="InterPro" id="IPR038366">
    <property type="entry name" value="Znf_CppX_C4_sf"/>
</dbReference>
<dbReference type="NCBIfam" id="TIGR00382">
    <property type="entry name" value="clpX"/>
    <property type="match status" value="1"/>
</dbReference>
<dbReference type="NCBIfam" id="NF003745">
    <property type="entry name" value="PRK05342.1"/>
    <property type="match status" value="1"/>
</dbReference>
<dbReference type="PANTHER" id="PTHR48102:SF7">
    <property type="entry name" value="ATP-DEPENDENT CLP PROTEASE ATP-BINDING SUBUNIT CLPX-LIKE, MITOCHONDRIAL"/>
    <property type="match status" value="1"/>
</dbReference>
<dbReference type="PANTHER" id="PTHR48102">
    <property type="entry name" value="ATP-DEPENDENT CLP PROTEASE ATP-BINDING SUBUNIT CLPX-LIKE, MITOCHONDRIAL-RELATED"/>
    <property type="match status" value="1"/>
</dbReference>
<dbReference type="Pfam" id="PF07724">
    <property type="entry name" value="AAA_2"/>
    <property type="match status" value="1"/>
</dbReference>
<dbReference type="Pfam" id="PF10431">
    <property type="entry name" value="ClpB_D2-small"/>
    <property type="match status" value="1"/>
</dbReference>
<dbReference type="Pfam" id="PF06689">
    <property type="entry name" value="zf-C4_ClpX"/>
    <property type="match status" value="1"/>
</dbReference>
<dbReference type="SMART" id="SM00382">
    <property type="entry name" value="AAA"/>
    <property type="match status" value="1"/>
</dbReference>
<dbReference type="SMART" id="SM01086">
    <property type="entry name" value="ClpB_D2-small"/>
    <property type="match status" value="1"/>
</dbReference>
<dbReference type="SMART" id="SM00994">
    <property type="entry name" value="zf-C4_ClpX"/>
    <property type="match status" value="1"/>
</dbReference>
<dbReference type="SUPFAM" id="SSF57716">
    <property type="entry name" value="Glucocorticoid receptor-like (DNA-binding domain)"/>
    <property type="match status" value="1"/>
</dbReference>
<dbReference type="SUPFAM" id="SSF52540">
    <property type="entry name" value="P-loop containing nucleoside triphosphate hydrolases"/>
    <property type="match status" value="1"/>
</dbReference>
<dbReference type="PROSITE" id="PS51902">
    <property type="entry name" value="CLPX_ZB"/>
    <property type="match status" value="1"/>
</dbReference>
<protein>
    <recommendedName>
        <fullName evidence="1">ATP-dependent Clp protease ATP-binding subunit ClpX</fullName>
    </recommendedName>
</protein>
<proteinExistence type="inferred from homology"/>
<evidence type="ECO:0000255" key="1">
    <source>
        <dbReference type="HAMAP-Rule" id="MF_00175"/>
    </source>
</evidence>
<evidence type="ECO:0000255" key="2">
    <source>
        <dbReference type="PROSITE-ProRule" id="PRU01250"/>
    </source>
</evidence>